<name>TU2_GEMSP</name>
<proteinExistence type="evidence at transcript level"/>
<feature type="signal peptide" evidence="2">
    <location>
        <begin position="1"/>
        <end position="21"/>
    </location>
</feature>
<feature type="propeptide" id="PRO_0000415077" evidence="1">
    <location>
        <begin position="22"/>
        <end position="39"/>
    </location>
</feature>
<feature type="peptide" id="PRO_0000415078" description="Turripeptide UID-02">
    <location>
        <begin position="41"/>
        <end position="92"/>
    </location>
</feature>
<reference key="1">
    <citation type="submission" date="2010-02" db="EMBL/GenBank/DDBJ databases">
        <title>Cysteine-rich toxin gene families from Gemmula speciosa (Reeve, 1843).</title>
        <authorList>
            <person name="Uichanco J.A.V."/>
            <person name="Planta J.R.G."/>
            <person name="Santos A.D."/>
            <person name="Concepcion G.P."/>
        </authorList>
    </citation>
    <scope>NUCLEOTIDE SEQUENCE [MRNA]</scope>
    <source>
        <tissue>Venom duct</tissue>
    </source>
</reference>
<dbReference type="EMBL" id="GU721050">
    <property type="protein sequence ID" value="ADE28867.1"/>
    <property type="molecule type" value="mRNA"/>
</dbReference>
<dbReference type="GO" id="GO:0005576">
    <property type="term" value="C:extracellular region"/>
    <property type="evidence" value="ECO:0007669"/>
    <property type="project" value="UniProtKB-SubCell"/>
</dbReference>
<dbReference type="GO" id="GO:0090729">
    <property type="term" value="F:toxin activity"/>
    <property type="evidence" value="ECO:0007669"/>
    <property type="project" value="UniProtKB-KW"/>
</dbReference>
<keyword id="KW-0528">Neurotoxin</keyword>
<keyword id="KW-0964">Secreted</keyword>
<keyword id="KW-0732">Signal</keyword>
<keyword id="KW-0800">Toxin</keyword>
<organism>
    <name type="scientific">Gemmula speciosa</name>
    <name type="common">Splendid gem-turris</name>
    <name type="synonym">Pleurotoma speciosa</name>
    <dbReference type="NCBI Taxonomy" id="439592"/>
    <lineage>
        <taxon>Eukaryota</taxon>
        <taxon>Metazoa</taxon>
        <taxon>Spiralia</taxon>
        <taxon>Lophotrochozoa</taxon>
        <taxon>Mollusca</taxon>
        <taxon>Gastropoda</taxon>
        <taxon>Caenogastropoda</taxon>
        <taxon>Neogastropoda</taxon>
        <taxon>Conoidea</taxon>
        <taxon>Turridae</taxon>
        <taxon>Gemmula</taxon>
    </lineage>
</organism>
<protein>
    <recommendedName>
        <fullName>Turripeptide UID-02</fullName>
    </recommendedName>
</protein>
<comment type="subcellular location">
    <subcellularLocation>
        <location evidence="1">Secreted</location>
    </subcellularLocation>
</comment>
<comment type="tissue specificity">
    <text>Expressed by the venom duct.</text>
</comment>
<comment type="miscellaneous">
    <text>The mature peptide contains only 1 cysteine.</text>
</comment>
<sequence length="92" mass="10300">MGFYMLLTVALLLTSLMNVEATPVDQAERSALEKSGLGNRIQPRYDNCGDAEQTATSQSAWTKKPMMKNVKLPAIMWSQIAFKIKAKTKTKY</sequence>
<evidence type="ECO:0000250" key="1"/>
<evidence type="ECO:0000255" key="2"/>
<accession>D5KXG9</accession>